<sequence>MELLCIDSKEKVKISEKIFGQKFNESLVHQVVRSYRITKRQGTSAQKSRSEVIGSGKKPWRQKGTGRARAGSVKSPIWRSGGVTFAKKTRDFKHKINKKMYKNALKSIFSELCRQNRILIVKNFFVKSEKTKLLKKKLNEMNLENVLIISKTIDKNLVLSSRNLNKVHVCFPININPINLISFKKTIITIDAIKIIEEILT</sequence>
<accession>Q8D211</accession>
<keyword id="KW-1185">Reference proteome</keyword>
<keyword id="KW-0687">Ribonucleoprotein</keyword>
<keyword id="KW-0689">Ribosomal protein</keyword>
<keyword id="KW-0694">RNA-binding</keyword>
<keyword id="KW-0699">rRNA-binding</keyword>
<evidence type="ECO:0000255" key="1">
    <source>
        <dbReference type="HAMAP-Rule" id="MF_01328"/>
    </source>
</evidence>
<evidence type="ECO:0000256" key="2">
    <source>
        <dbReference type="SAM" id="MobiDB-lite"/>
    </source>
</evidence>
<evidence type="ECO:0000305" key="3"/>
<name>RL4_WIGBR</name>
<feature type="chain" id="PRO_0000129312" description="Large ribosomal subunit protein uL4">
    <location>
        <begin position="1"/>
        <end position="201"/>
    </location>
</feature>
<feature type="region of interest" description="Disordered" evidence="2">
    <location>
        <begin position="39"/>
        <end position="72"/>
    </location>
</feature>
<proteinExistence type="inferred from homology"/>
<comment type="function">
    <text evidence="1">One of the primary rRNA binding proteins, this protein initially binds near the 5'-end of the 23S rRNA. It is important during the early stages of 50S assembly. It makes multiple contacts with different domains of the 23S rRNA in the assembled 50S subunit and ribosome.</text>
</comment>
<comment type="function">
    <text evidence="1">Forms part of the polypeptide exit tunnel.</text>
</comment>
<comment type="subunit">
    <text evidence="1">Part of the 50S ribosomal subunit.</text>
</comment>
<comment type="similarity">
    <text evidence="1">Belongs to the universal ribosomal protein uL4 family.</text>
</comment>
<reference key="1">
    <citation type="journal article" date="2002" name="Nat. Genet.">
        <title>Genome sequence of the endocellular obligate symbiont of tsetse flies, Wigglesworthia glossinidia.</title>
        <authorList>
            <person name="Akman L."/>
            <person name="Yamashita A."/>
            <person name="Watanabe H."/>
            <person name="Oshima K."/>
            <person name="Shiba T."/>
            <person name="Hattori M."/>
            <person name="Aksoy S."/>
        </authorList>
    </citation>
    <scope>NUCLEOTIDE SEQUENCE [LARGE SCALE GENOMIC DNA]</scope>
</reference>
<dbReference type="EMBL" id="BA000021">
    <property type="protein sequence ID" value="BAC24690.1"/>
    <property type="molecule type" value="Genomic_DNA"/>
</dbReference>
<dbReference type="SMR" id="Q8D211"/>
<dbReference type="STRING" id="36870.gene:10369053"/>
<dbReference type="KEGG" id="wbr:rplD"/>
<dbReference type="eggNOG" id="COG0088">
    <property type="taxonomic scope" value="Bacteria"/>
</dbReference>
<dbReference type="HOGENOM" id="CLU_041575_5_2_6"/>
<dbReference type="OrthoDB" id="9803201at2"/>
<dbReference type="Proteomes" id="UP000000562">
    <property type="component" value="Chromosome"/>
</dbReference>
<dbReference type="GO" id="GO:1990904">
    <property type="term" value="C:ribonucleoprotein complex"/>
    <property type="evidence" value="ECO:0007669"/>
    <property type="project" value="UniProtKB-KW"/>
</dbReference>
<dbReference type="GO" id="GO:0005840">
    <property type="term" value="C:ribosome"/>
    <property type="evidence" value="ECO:0007669"/>
    <property type="project" value="UniProtKB-KW"/>
</dbReference>
<dbReference type="GO" id="GO:0019843">
    <property type="term" value="F:rRNA binding"/>
    <property type="evidence" value="ECO:0007669"/>
    <property type="project" value="UniProtKB-UniRule"/>
</dbReference>
<dbReference type="GO" id="GO:0003735">
    <property type="term" value="F:structural constituent of ribosome"/>
    <property type="evidence" value="ECO:0007669"/>
    <property type="project" value="InterPro"/>
</dbReference>
<dbReference type="GO" id="GO:0006412">
    <property type="term" value="P:translation"/>
    <property type="evidence" value="ECO:0007669"/>
    <property type="project" value="UniProtKB-UniRule"/>
</dbReference>
<dbReference type="Gene3D" id="3.40.1370.10">
    <property type="match status" value="1"/>
</dbReference>
<dbReference type="HAMAP" id="MF_01328_B">
    <property type="entry name" value="Ribosomal_uL4_B"/>
    <property type="match status" value="1"/>
</dbReference>
<dbReference type="InterPro" id="IPR002136">
    <property type="entry name" value="Ribosomal_uL4"/>
</dbReference>
<dbReference type="InterPro" id="IPR013005">
    <property type="entry name" value="Ribosomal_uL4-like"/>
</dbReference>
<dbReference type="InterPro" id="IPR023574">
    <property type="entry name" value="Ribosomal_uL4_dom_sf"/>
</dbReference>
<dbReference type="NCBIfam" id="TIGR03953">
    <property type="entry name" value="rplD_bact"/>
    <property type="match status" value="1"/>
</dbReference>
<dbReference type="PANTHER" id="PTHR10746">
    <property type="entry name" value="50S RIBOSOMAL PROTEIN L4"/>
    <property type="match status" value="1"/>
</dbReference>
<dbReference type="PANTHER" id="PTHR10746:SF6">
    <property type="entry name" value="LARGE RIBOSOMAL SUBUNIT PROTEIN UL4M"/>
    <property type="match status" value="1"/>
</dbReference>
<dbReference type="Pfam" id="PF00573">
    <property type="entry name" value="Ribosomal_L4"/>
    <property type="match status" value="1"/>
</dbReference>
<dbReference type="SUPFAM" id="SSF52166">
    <property type="entry name" value="Ribosomal protein L4"/>
    <property type="match status" value="1"/>
</dbReference>
<gene>
    <name evidence="1" type="primary">rplD</name>
    <name type="ordered locus">WIGBR5440</name>
</gene>
<organism>
    <name type="scientific">Wigglesworthia glossinidia brevipalpis</name>
    <dbReference type="NCBI Taxonomy" id="36870"/>
    <lineage>
        <taxon>Bacteria</taxon>
        <taxon>Pseudomonadati</taxon>
        <taxon>Pseudomonadota</taxon>
        <taxon>Gammaproteobacteria</taxon>
        <taxon>Enterobacterales</taxon>
        <taxon>Erwiniaceae</taxon>
        <taxon>Wigglesworthia</taxon>
    </lineage>
</organism>
<protein>
    <recommendedName>
        <fullName evidence="1">Large ribosomal subunit protein uL4</fullName>
    </recommendedName>
    <alternativeName>
        <fullName evidence="3">50S ribosomal protein L4</fullName>
    </alternativeName>
</protein>